<reference key="1">
    <citation type="submission" date="2008-07" db="EMBL/GenBank/DDBJ databases">
        <title>Complete sequence of Geobacter bemidjiensis BEM.</title>
        <authorList>
            <consortium name="US DOE Joint Genome Institute"/>
            <person name="Lucas S."/>
            <person name="Copeland A."/>
            <person name="Lapidus A."/>
            <person name="Glavina del Rio T."/>
            <person name="Dalin E."/>
            <person name="Tice H."/>
            <person name="Bruce D."/>
            <person name="Goodwin L."/>
            <person name="Pitluck S."/>
            <person name="Kiss H."/>
            <person name="Brettin T."/>
            <person name="Detter J.C."/>
            <person name="Han C."/>
            <person name="Kuske C.R."/>
            <person name="Schmutz J."/>
            <person name="Larimer F."/>
            <person name="Land M."/>
            <person name="Hauser L."/>
            <person name="Kyrpides N."/>
            <person name="Lykidis A."/>
            <person name="Lovley D."/>
            <person name="Richardson P."/>
        </authorList>
    </citation>
    <scope>NUCLEOTIDE SEQUENCE [LARGE SCALE GENOMIC DNA]</scope>
    <source>
        <strain>ATCC BAA-1014 / DSM 16622 / JCM 12645 / Bem</strain>
    </source>
</reference>
<sequence>MIKVAIVGASGYTGVELIRILHSHPEVAVTCVTSEQSAGRPVSSVFPSLRGRCDIVLENLEPVGIAEKVDIVFTALPHKAAMEVVPTFMKMGKDVIDLSADYRIHDADTYGKWYEPHLNPELLPEAVYGIPELRRAEIAEASLIANPGCYPTSVILGLAPLLKGKVIDPRSIIVDAASGTSGAGRGAKVDNLYCEVNEGFRAYGVGGVHRHIPEIEQELSLLAGNPLNITFTPHLVPMDRGILSTIYSQPTGSVKAADLIALYQAFYDGEPFVRVLPEGVLPSTAHVRGSNFCDIGITVDQRTGRVIVISAIDNLVKGASGQAVQNMNLMCGLPETLGLDLLPVFP</sequence>
<comment type="function">
    <text evidence="1">Catalyzes the NADPH-dependent reduction of N-acetyl-5-glutamyl phosphate to yield N-acetyl-L-glutamate 5-semialdehyde.</text>
</comment>
<comment type="catalytic activity">
    <reaction evidence="1">
        <text>N-acetyl-L-glutamate 5-semialdehyde + phosphate + NADP(+) = N-acetyl-L-glutamyl 5-phosphate + NADPH + H(+)</text>
        <dbReference type="Rhea" id="RHEA:21588"/>
        <dbReference type="ChEBI" id="CHEBI:15378"/>
        <dbReference type="ChEBI" id="CHEBI:29123"/>
        <dbReference type="ChEBI" id="CHEBI:43474"/>
        <dbReference type="ChEBI" id="CHEBI:57783"/>
        <dbReference type="ChEBI" id="CHEBI:57936"/>
        <dbReference type="ChEBI" id="CHEBI:58349"/>
        <dbReference type="EC" id="1.2.1.38"/>
    </reaction>
</comment>
<comment type="pathway">
    <text evidence="1">Amino-acid biosynthesis; L-arginine biosynthesis; N(2)-acetyl-L-ornithine from L-glutamate: step 3/4.</text>
</comment>
<comment type="subcellular location">
    <subcellularLocation>
        <location evidence="1">Cytoplasm</location>
    </subcellularLocation>
</comment>
<comment type="similarity">
    <text evidence="1">Belongs to the NAGSA dehydrogenase family. Type 1 subfamily.</text>
</comment>
<name>ARGC_CITBB</name>
<gene>
    <name evidence="1" type="primary">argC</name>
    <name type="ordered locus">Gbem_0914</name>
</gene>
<keyword id="KW-0028">Amino-acid biosynthesis</keyword>
<keyword id="KW-0055">Arginine biosynthesis</keyword>
<keyword id="KW-0963">Cytoplasm</keyword>
<keyword id="KW-0521">NADP</keyword>
<keyword id="KW-0560">Oxidoreductase</keyword>
<keyword id="KW-1185">Reference proteome</keyword>
<evidence type="ECO:0000255" key="1">
    <source>
        <dbReference type="HAMAP-Rule" id="MF_00150"/>
    </source>
</evidence>
<dbReference type="EC" id="1.2.1.38" evidence="1"/>
<dbReference type="EMBL" id="CP001124">
    <property type="protein sequence ID" value="ACH37935.1"/>
    <property type="molecule type" value="Genomic_DNA"/>
</dbReference>
<dbReference type="RefSeq" id="WP_012529347.1">
    <property type="nucleotide sequence ID" value="NC_011146.1"/>
</dbReference>
<dbReference type="SMR" id="B5EFN1"/>
<dbReference type="STRING" id="404380.Gbem_0914"/>
<dbReference type="KEGG" id="gbm:Gbem_0914"/>
<dbReference type="eggNOG" id="COG0002">
    <property type="taxonomic scope" value="Bacteria"/>
</dbReference>
<dbReference type="HOGENOM" id="CLU_006384_0_1_7"/>
<dbReference type="OrthoDB" id="9801289at2"/>
<dbReference type="UniPathway" id="UPA00068">
    <property type="reaction ID" value="UER00108"/>
</dbReference>
<dbReference type="Proteomes" id="UP000008825">
    <property type="component" value="Chromosome"/>
</dbReference>
<dbReference type="GO" id="GO:0005737">
    <property type="term" value="C:cytoplasm"/>
    <property type="evidence" value="ECO:0007669"/>
    <property type="project" value="UniProtKB-SubCell"/>
</dbReference>
<dbReference type="GO" id="GO:0003942">
    <property type="term" value="F:N-acetyl-gamma-glutamyl-phosphate reductase activity"/>
    <property type="evidence" value="ECO:0007669"/>
    <property type="project" value="UniProtKB-UniRule"/>
</dbReference>
<dbReference type="GO" id="GO:0051287">
    <property type="term" value="F:NAD binding"/>
    <property type="evidence" value="ECO:0007669"/>
    <property type="project" value="InterPro"/>
</dbReference>
<dbReference type="GO" id="GO:0070401">
    <property type="term" value="F:NADP+ binding"/>
    <property type="evidence" value="ECO:0007669"/>
    <property type="project" value="InterPro"/>
</dbReference>
<dbReference type="GO" id="GO:0006526">
    <property type="term" value="P:L-arginine biosynthetic process"/>
    <property type="evidence" value="ECO:0007669"/>
    <property type="project" value="UniProtKB-UniRule"/>
</dbReference>
<dbReference type="CDD" id="cd23934">
    <property type="entry name" value="AGPR_1_C"/>
    <property type="match status" value="1"/>
</dbReference>
<dbReference type="CDD" id="cd17895">
    <property type="entry name" value="AGPR_1_N"/>
    <property type="match status" value="1"/>
</dbReference>
<dbReference type="FunFam" id="3.30.360.10:FF:000014">
    <property type="entry name" value="N-acetyl-gamma-glutamyl-phosphate reductase"/>
    <property type="match status" value="1"/>
</dbReference>
<dbReference type="Gene3D" id="3.30.360.10">
    <property type="entry name" value="Dihydrodipicolinate Reductase, domain 2"/>
    <property type="match status" value="1"/>
</dbReference>
<dbReference type="Gene3D" id="3.40.50.720">
    <property type="entry name" value="NAD(P)-binding Rossmann-like Domain"/>
    <property type="match status" value="1"/>
</dbReference>
<dbReference type="HAMAP" id="MF_00150">
    <property type="entry name" value="ArgC_type1"/>
    <property type="match status" value="1"/>
</dbReference>
<dbReference type="InterPro" id="IPR023013">
    <property type="entry name" value="AGPR_AS"/>
</dbReference>
<dbReference type="InterPro" id="IPR000706">
    <property type="entry name" value="AGPR_type-1"/>
</dbReference>
<dbReference type="InterPro" id="IPR036291">
    <property type="entry name" value="NAD(P)-bd_dom_sf"/>
</dbReference>
<dbReference type="InterPro" id="IPR050085">
    <property type="entry name" value="NAGSA_dehydrogenase"/>
</dbReference>
<dbReference type="InterPro" id="IPR000534">
    <property type="entry name" value="Semialdehyde_DH_NAD-bd"/>
</dbReference>
<dbReference type="NCBIfam" id="TIGR01850">
    <property type="entry name" value="argC"/>
    <property type="match status" value="1"/>
</dbReference>
<dbReference type="PANTHER" id="PTHR32338:SF10">
    <property type="entry name" value="N-ACETYL-GAMMA-GLUTAMYL-PHOSPHATE REDUCTASE, CHLOROPLASTIC-RELATED"/>
    <property type="match status" value="1"/>
</dbReference>
<dbReference type="PANTHER" id="PTHR32338">
    <property type="entry name" value="N-ACETYL-GAMMA-GLUTAMYL-PHOSPHATE REDUCTASE, CHLOROPLASTIC-RELATED-RELATED"/>
    <property type="match status" value="1"/>
</dbReference>
<dbReference type="Pfam" id="PF01118">
    <property type="entry name" value="Semialdhyde_dh"/>
    <property type="match status" value="1"/>
</dbReference>
<dbReference type="Pfam" id="PF22698">
    <property type="entry name" value="Semialdhyde_dhC_1"/>
    <property type="match status" value="1"/>
</dbReference>
<dbReference type="SMART" id="SM00859">
    <property type="entry name" value="Semialdhyde_dh"/>
    <property type="match status" value="1"/>
</dbReference>
<dbReference type="SUPFAM" id="SSF55347">
    <property type="entry name" value="Glyceraldehyde-3-phosphate dehydrogenase-like, C-terminal domain"/>
    <property type="match status" value="1"/>
</dbReference>
<dbReference type="SUPFAM" id="SSF51735">
    <property type="entry name" value="NAD(P)-binding Rossmann-fold domains"/>
    <property type="match status" value="1"/>
</dbReference>
<dbReference type="PROSITE" id="PS01224">
    <property type="entry name" value="ARGC"/>
    <property type="match status" value="1"/>
</dbReference>
<feature type="chain" id="PRO_1000096725" description="N-acetyl-gamma-glutamyl-phosphate reductase">
    <location>
        <begin position="1"/>
        <end position="346"/>
    </location>
</feature>
<feature type="active site" evidence="1">
    <location>
        <position position="149"/>
    </location>
</feature>
<protein>
    <recommendedName>
        <fullName evidence="1">N-acetyl-gamma-glutamyl-phosphate reductase</fullName>
        <shortName evidence="1">AGPR</shortName>
        <ecNumber evidence="1">1.2.1.38</ecNumber>
    </recommendedName>
    <alternativeName>
        <fullName evidence="1">N-acetyl-glutamate semialdehyde dehydrogenase</fullName>
        <shortName evidence="1">NAGSA dehydrogenase</shortName>
    </alternativeName>
</protein>
<organism>
    <name type="scientific">Citrifermentans bemidjiense (strain ATCC BAA-1014 / DSM 16622 / JCM 12645 / Bem)</name>
    <name type="common">Geobacter bemidjiensis</name>
    <dbReference type="NCBI Taxonomy" id="404380"/>
    <lineage>
        <taxon>Bacteria</taxon>
        <taxon>Pseudomonadati</taxon>
        <taxon>Thermodesulfobacteriota</taxon>
        <taxon>Desulfuromonadia</taxon>
        <taxon>Geobacterales</taxon>
        <taxon>Geobacteraceae</taxon>
        <taxon>Citrifermentans</taxon>
    </lineage>
</organism>
<accession>B5EFN1</accession>
<proteinExistence type="inferred from homology"/>